<sequence length="142" mass="15379">MVLSPADKTNIKSTWDKIGGHAGDYGGEALDRTFQSFPTTKTYFPHFDLSPGSAQVKAHGKKVADALTTAVAHLDDLPGALSALSDLHAYKLRVDPVNFKLLSHCLLVTLACHHPTEFTPAVHASLDKFFTAVSTVLTSKYR</sequence>
<evidence type="ECO:0000250" key="1">
    <source>
        <dbReference type="UniProtKB" id="P01942"/>
    </source>
</evidence>
<evidence type="ECO:0000250" key="2">
    <source>
        <dbReference type="UniProtKB" id="P01946"/>
    </source>
</evidence>
<evidence type="ECO:0000250" key="3">
    <source>
        <dbReference type="UniProtKB" id="P18969"/>
    </source>
</evidence>
<evidence type="ECO:0000250" key="4">
    <source>
        <dbReference type="UniProtKB" id="P69905"/>
    </source>
</evidence>
<evidence type="ECO:0000255" key="5">
    <source>
        <dbReference type="PROSITE-ProRule" id="PRU00238"/>
    </source>
</evidence>
<organism>
    <name type="scientific">Canis latrans</name>
    <name type="common">Coyote</name>
    <dbReference type="NCBI Taxonomy" id="9614"/>
    <lineage>
        <taxon>Eukaryota</taxon>
        <taxon>Metazoa</taxon>
        <taxon>Chordata</taxon>
        <taxon>Craniata</taxon>
        <taxon>Vertebrata</taxon>
        <taxon>Euteleostomi</taxon>
        <taxon>Mammalia</taxon>
        <taxon>Eutheria</taxon>
        <taxon>Laurasiatheria</taxon>
        <taxon>Carnivora</taxon>
        <taxon>Caniformia</taxon>
        <taxon>Canidae</taxon>
        <taxon>Canis</taxon>
    </lineage>
</organism>
<reference key="1">
    <citation type="journal article" date="1974" name="Biochem. Genet.">
        <title>The tryptic peptides of coyote (Canis latrans) hemoglobin.</title>
        <authorList>
            <person name="Runkel D."/>
            <person name="Dresler S.L."/>
            <person name="Brimhall B."/>
            <person name="Jones R.T."/>
        </authorList>
    </citation>
    <scope>PRELIMINARY PROTEIN SEQUENCE OF 2-142</scope>
</reference>
<keyword id="KW-0007">Acetylation</keyword>
<keyword id="KW-0903">Direct protein sequencing</keyword>
<keyword id="KW-0349">Heme</keyword>
<keyword id="KW-0408">Iron</keyword>
<keyword id="KW-0479">Metal-binding</keyword>
<keyword id="KW-0561">Oxygen transport</keyword>
<keyword id="KW-0597">Phosphoprotein</keyword>
<keyword id="KW-0813">Transport</keyword>
<accession>P60530</accession>
<accession>P01952</accession>
<name>HBA_CANLA</name>
<feature type="initiator methionine" description="Removed" evidence="3">
    <location>
        <position position="1"/>
    </location>
</feature>
<feature type="chain" id="PRO_0000052581" description="Hemoglobin subunit alpha">
    <location>
        <begin position="2"/>
        <end position="142"/>
    </location>
</feature>
<feature type="peptide" id="PRO_0000455848" description="Hemopressin" evidence="2">
    <location>
        <begin position="96"/>
        <end position="104"/>
    </location>
</feature>
<feature type="domain" description="Globin" evidence="5">
    <location>
        <begin position="2"/>
        <end position="142"/>
    </location>
</feature>
<feature type="binding site" evidence="5">
    <location>
        <position position="59"/>
    </location>
    <ligand>
        <name>O2</name>
        <dbReference type="ChEBI" id="CHEBI:15379"/>
    </ligand>
</feature>
<feature type="binding site" description="proximal binding residue" evidence="5">
    <location>
        <position position="88"/>
    </location>
    <ligand>
        <name>heme b</name>
        <dbReference type="ChEBI" id="CHEBI:60344"/>
    </ligand>
    <ligandPart>
        <name>Fe</name>
        <dbReference type="ChEBI" id="CHEBI:18248"/>
    </ligandPart>
</feature>
<feature type="modified residue" description="Phosphoserine" evidence="4">
    <location>
        <position position="4"/>
    </location>
</feature>
<feature type="modified residue" description="N6-succinyllysine" evidence="1">
    <location>
        <position position="8"/>
    </location>
</feature>
<feature type="modified residue" description="Phosphothreonine" evidence="4">
    <location>
        <position position="9"/>
    </location>
</feature>
<feature type="modified residue" description="N6-succinyllysine" evidence="1">
    <location>
        <position position="12"/>
    </location>
</feature>
<feature type="modified residue" description="N6-acetyllysine; alternate" evidence="4">
    <location>
        <position position="17"/>
    </location>
</feature>
<feature type="modified residue" description="N6-succinyllysine; alternate" evidence="1">
    <location>
        <position position="17"/>
    </location>
</feature>
<feature type="modified residue" description="Phosphotyrosine" evidence="4">
    <location>
        <position position="25"/>
    </location>
</feature>
<feature type="modified residue" description="Phosphoserine" evidence="4">
    <location>
        <position position="36"/>
    </location>
</feature>
<feature type="modified residue" description="N6-succinyllysine" evidence="1">
    <location>
        <position position="41"/>
    </location>
</feature>
<feature type="modified residue" description="Phosphoserine" evidence="4">
    <location>
        <position position="50"/>
    </location>
</feature>
<feature type="modified residue" description="Phosphoserine" evidence="1">
    <location>
        <position position="103"/>
    </location>
</feature>
<feature type="modified residue" description="Phosphothreonine" evidence="1">
    <location>
        <position position="109"/>
    </location>
</feature>
<feature type="modified residue" description="Phosphoserine" evidence="1">
    <location>
        <position position="125"/>
    </location>
</feature>
<feature type="modified residue" description="Phosphothreonine" evidence="1">
    <location>
        <position position="135"/>
    </location>
</feature>
<feature type="modified residue" description="Phosphothreonine" evidence="1">
    <location>
        <position position="138"/>
    </location>
</feature>
<feature type="modified residue" description="Phosphoserine" evidence="1">
    <location>
        <position position="139"/>
    </location>
</feature>
<gene>
    <name type="primary">HBA</name>
</gene>
<proteinExistence type="evidence at protein level"/>
<protein>
    <recommendedName>
        <fullName>Hemoglobin subunit alpha</fullName>
    </recommendedName>
    <alternativeName>
        <fullName>Alpha-globin</fullName>
    </alternativeName>
    <alternativeName>
        <fullName>Hemoglobin alpha chain</fullName>
    </alternativeName>
    <component>
        <recommendedName>
            <fullName evidence="2">Hemopressin</fullName>
        </recommendedName>
    </component>
</protein>
<dbReference type="PIR" id="A90227">
    <property type="entry name" value="HADGY"/>
</dbReference>
<dbReference type="SMR" id="P60530"/>
<dbReference type="GO" id="GO:0072562">
    <property type="term" value="C:blood microparticle"/>
    <property type="evidence" value="ECO:0007669"/>
    <property type="project" value="TreeGrafter"/>
</dbReference>
<dbReference type="GO" id="GO:0031838">
    <property type="term" value="C:haptoglobin-hemoglobin complex"/>
    <property type="evidence" value="ECO:0007669"/>
    <property type="project" value="TreeGrafter"/>
</dbReference>
<dbReference type="GO" id="GO:0005833">
    <property type="term" value="C:hemoglobin complex"/>
    <property type="evidence" value="ECO:0007669"/>
    <property type="project" value="InterPro"/>
</dbReference>
<dbReference type="GO" id="GO:0031720">
    <property type="term" value="F:haptoglobin binding"/>
    <property type="evidence" value="ECO:0007669"/>
    <property type="project" value="TreeGrafter"/>
</dbReference>
<dbReference type="GO" id="GO:0020037">
    <property type="term" value="F:heme binding"/>
    <property type="evidence" value="ECO:0007669"/>
    <property type="project" value="InterPro"/>
</dbReference>
<dbReference type="GO" id="GO:0005506">
    <property type="term" value="F:iron ion binding"/>
    <property type="evidence" value="ECO:0007669"/>
    <property type="project" value="InterPro"/>
</dbReference>
<dbReference type="GO" id="GO:0043177">
    <property type="term" value="F:organic acid binding"/>
    <property type="evidence" value="ECO:0007669"/>
    <property type="project" value="TreeGrafter"/>
</dbReference>
<dbReference type="GO" id="GO:0019825">
    <property type="term" value="F:oxygen binding"/>
    <property type="evidence" value="ECO:0007669"/>
    <property type="project" value="InterPro"/>
</dbReference>
<dbReference type="GO" id="GO:0005344">
    <property type="term" value="F:oxygen carrier activity"/>
    <property type="evidence" value="ECO:0007669"/>
    <property type="project" value="UniProtKB-KW"/>
</dbReference>
<dbReference type="GO" id="GO:0004601">
    <property type="term" value="F:peroxidase activity"/>
    <property type="evidence" value="ECO:0007669"/>
    <property type="project" value="TreeGrafter"/>
</dbReference>
<dbReference type="GO" id="GO:0042744">
    <property type="term" value="P:hydrogen peroxide catabolic process"/>
    <property type="evidence" value="ECO:0007669"/>
    <property type="project" value="TreeGrafter"/>
</dbReference>
<dbReference type="CDD" id="cd08927">
    <property type="entry name" value="Hb-alpha-like"/>
    <property type="match status" value="1"/>
</dbReference>
<dbReference type="FunFam" id="1.10.490.10:FF:000002">
    <property type="entry name" value="Hemoglobin subunit alpha"/>
    <property type="match status" value="1"/>
</dbReference>
<dbReference type="Gene3D" id="1.10.490.10">
    <property type="entry name" value="Globins"/>
    <property type="match status" value="1"/>
</dbReference>
<dbReference type="InterPro" id="IPR000971">
    <property type="entry name" value="Globin"/>
</dbReference>
<dbReference type="InterPro" id="IPR009050">
    <property type="entry name" value="Globin-like_sf"/>
</dbReference>
<dbReference type="InterPro" id="IPR012292">
    <property type="entry name" value="Globin/Proto"/>
</dbReference>
<dbReference type="InterPro" id="IPR002338">
    <property type="entry name" value="Hemoglobin_a-typ"/>
</dbReference>
<dbReference type="InterPro" id="IPR050056">
    <property type="entry name" value="Hemoglobin_oxygen_transport"/>
</dbReference>
<dbReference type="InterPro" id="IPR002339">
    <property type="entry name" value="Hemoglobin_pi"/>
</dbReference>
<dbReference type="PANTHER" id="PTHR11442">
    <property type="entry name" value="HEMOGLOBIN FAMILY MEMBER"/>
    <property type="match status" value="1"/>
</dbReference>
<dbReference type="PANTHER" id="PTHR11442:SF48">
    <property type="entry name" value="HEMOGLOBIN SUBUNIT ALPHA"/>
    <property type="match status" value="1"/>
</dbReference>
<dbReference type="Pfam" id="PF00042">
    <property type="entry name" value="Globin"/>
    <property type="match status" value="1"/>
</dbReference>
<dbReference type="PRINTS" id="PR00612">
    <property type="entry name" value="ALPHAHAEM"/>
</dbReference>
<dbReference type="PRINTS" id="PR00815">
    <property type="entry name" value="PIHAEM"/>
</dbReference>
<dbReference type="SUPFAM" id="SSF46458">
    <property type="entry name" value="Globin-like"/>
    <property type="match status" value="1"/>
</dbReference>
<dbReference type="PROSITE" id="PS01033">
    <property type="entry name" value="GLOBIN"/>
    <property type="match status" value="1"/>
</dbReference>
<comment type="function">
    <text>Involved in oxygen transport from the lung to the various peripheral tissues.</text>
</comment>
<comment type="function">
    <molecule>Hemopressin</molecule>
    <text evidence="2">Hemopressin acts as an antagonist peptide of the cannabinoid receptor CNR1. Hemopressin-binding efficiently blocks cannabinoid receptor CNR1 and subsequent signaling.</text>
</comment>
<comment type="subunit">
    <text>Heterotetramer of two alpha chains and two beta chains.</text>
</comment>
<comment type="tissue specificity">
    <text>Red blood cells.</text>
</comment>
<comment type="similarity">
    <text evidence="5">Belongs to the globin family.</text>
</comment>